<organism>
    <name type="scientific">Arabidopsis thaliana</name>
    <name type="common">Mouse-ear cress</name>
    <dbReference type="NCBI Taxonomy" id="3702"/>
    <lineage>
        <taxon>Eukaryota</taxon>
        <taxon>Viridiplantae</taxon>
        <taxon>Streptophyta</taxon>
        <taxon>Embryophyta</taxon>
        <taxon>Tracheophyta</taxon>
        <taxon>Spermatophyta</taxon>
        <taxon>Magnoliopsida</taxon>
        <taxon>eudicotyledons</taxon>
        <taxon>Gunneridae</taxon>
        <taxon>Pentapetalae</taxon>
        <taxon>rosids</taxon>
        <taxon>malvids</taxon>
        <taxon>Brassicales</taxon>
        <taxon>Brassicaceae</taxon>
        <taxon>Camelineae</taxon>
        <taxon>Arabidopsis</taxon>
    </lineage>
</organism>
<feature type="chain" id="PRO_0000396042" description="F-box protein At3g27290">
    <location>
        <begin position="1"/>
        <end position="382"/>
    </location>
</feature>
<feature type="domain" description="F-box">
    <location>
        <begin position="16"/>
        <end position="105"/>
    </location>
</feature>
<keyword id="KW-1185">Reference proteome</keyword>
<dbReference type="EMBL" id="AP000381">
    <property type="protein sequence ID" value="BAB02124.1"/>
    <property type="molecule type" value="Genomic_DNA"/>
</dbReference>
<dbReference type="EMBL" id="CP002686">
    <property type="protein sequence ID" value="AEE77289.1"/>
    <property type="molecule type" value="Genomic_DNA"/>
</dbReference>
<dbReference type="EMBL" id="AY060566">
    <property type="protein sequence ID" value="AAL31195.1"/>
    <property type="molecule type" value="mRNA"/>
</dbReference>
<dbReference type="EMBL" id="BT006347">
    <property type="protein sequence ID" value="AAP21155.1"/>
    <property type="molecule type" value="mRNA"/>
</dbReference>
<dbReference type="EMBL" id="AK221663">
    <property type="protein sequence ID" value="BAD95342.1"/>
    <property type="molecule type" value="mRNA"/>
</dbReference>
<dbReference type="RefSeq" id="NP_566814.1">
    <property type="nucleotide sequence ID" value="NM_113643.2"/>
</dbReference>
<dbReference type="BioGRID" id="7678">
    <property type="interactions" value="4"/>
</dbReference>
<dbReference type="FunCoup" id="Q9LK24">
    <property type="interactions" value="15"/>
</dbReference>
<dbReference type="IntAct" id="Q9LK24">
    <property type="interactions" value="1"/>
</dbReference>
<dbReference type="STRING" id="3702.Q9LK24"/>
<dbReference type="PaxDb" id="3702-AT3G27290.1"/>
<dbReference type="ProteomicsDB" id="222419"/>
<dbReference type="EnsemblPlants" id="AT3G27290.1">
    <property type="protein sequence ID" value="AT3G27290.1"/>
    <property type="gene ID" value="AT3G27290"/>
</dbReference>
<dbReference type="GeneID" id="822348"/>
<dbReference type="Gramene" id="AT3G27290.1">
    <property type="protein sequence ID" value="AT3G27290.1"/>
    <property type="gene ID" value="AT3G27290"/>
</dbReference>
<dbReference type="KEGG" id="ath:AT3G27290"/>
<dbReference type="Araport" id="AT3G27290"/>
<dbReference type="TAIR" id="AT3G27290"/>
<dbReference type="eggNOG" id="ENOG502QRGM">
    <property type="taxonomic scope" value="Eukaryota"/>
</dbReference>
<dbReference type="HOGENOM" id="CLU_748750_0_0_1"/>
<dbReference type="InParanoid" id="Q9LK24"/>
<dbReference type="OMA" id="PEDPFCM"/>
<dbReference type="OrthoDB" id="10044893at2759"/>
<dbReference type="PhylomeDB" id="Q9LK24"/>
<dbReference type="PRO" id="PR:Q9LK24"/>
<dbReference type="Proteomes" id="UP000006548">
    <property type="component" value="Chromosome 3"/>
</dbReference>
<dbReference type="ExpressionAtlas" id="Q9LK24">
    <property type="expression patterns" value="baseline and differential"/>
</dbReference>
<dbReference type="Gene3D" id="3.80.10.10">
    <property type="entry name" value="Ribonuclease Inhibitor"/>
    <property type="match status" value="1"/>
</dbReference>
<dbReference type="InterPro" id="IPR036047">
    <property type="entry name" value="F-box-like_dom_sf"/>
</dbReference>
<dbReference type="InterPro" id="IPR050648">
    <property type="entry name" value="F-box_LRR-repeat"/>
</dbReference>
<dbReference type="InterPro" id="IPR032675">
    <property type="entry name" value="LRR_dom_sf"/>
</dbReference>
<dbReference type="PANTHER" id="PTHR13382:SF84">
    <property type="entry name" value="F-BOX DOMAIN-CONTAINING PROTEIN"/>
    <property type="match status" value="1"/>
</dbReference>
<dbReference type="PANTHER" id="PTHR13382">
    <property type="entry name" value="MITOCHONDRIAL ATP SYNTHASE COUPLING FACTOR B"/>
    <property type="match status" value="1"/>
</dbReference>
<dbReference type="SUPFAM" id="SSF81383">
    <property type="entry name" value="F-box domain"/>
    <property type="match status" value="1"/>
</dbReference>
<dbReference type="SUPFAM" id="SSF52047">
    <property type="entry name" value="RNI-like"/>
    <property type="match status" value="1"/>
</dbReference>
<dbReference type="PROSITE" id="PS00198">
    <property type="entry name" value="4FE4S_FER_1"/>
    <property type="match status" value="1"/>
</dbReference>
<name>FB327_ARATH</name>
<gene>
    <name type="ordered locus">At3g27290</name>
    <name type="ORF">K17E12.11</name>
</gene>
<accession>Q9LK24</accession>
<sequence length="382" mass="43125">MEVNYERLRGSYNDYRKLELGLGEFGDDFVGLPDDPFCMNIRSTLNSISDWFHENQIGLVSEDHTLPEDPFCMRVRSTLNTISDWFHENQKEIGVVDQMLFETLSWFYNNDDDDGDDDDDGGGGGEAHDAFELVLPYLELKEILAVEVVCRSLRDSVGKEPFFWTSIDLNDSFLQYRVTDESLLKLTRRALGGVRCLNLGGCVGITDYGLKQVLASNPHLTKLSVSGCLRLSTAGLVSTLRDLKSSNRLGVKSLITGGALYFTKEQFKELNLLLGGDAKVGLQERKKRFYTSCRSEFYLEDDRVTDLEICPWCEKPSLVFDCPADTCPLKGQYPYSKSSCRACVVCIERCHECGSCLNDCENKPFCFAFSCVVCIEKRSNRL</sequence>
<reference key="1">
    <citation type="journal article" date="2000" name="DNA Res.">
        <title>Structural analysis of Arabidopsis thaliana chromosome 3. II. Sequence features of the 4,251,695 bp regions covered by 90 P1, TAC and BAC clones.</title>
        <authorList>
            <person name="Kaneko T."/>
            <person name="Katoh T."/>
            <person name="Sato S."/>
            <person name="Nakamura Y."/>
            <person name="Asamizu E."/>
            <person name="Tabata S."/>
        </authorList>
    </citation>
    <scope>NUCLEOTIDE SEQUENCE [LARGE SCALE GENOMIC DNA]</scope>
    <source>
        <strain>cv. Columbia</strain>
    </source>
</reference>
<reference key="2">
    <citation type="journal article" date="2017" name="Plant J.">
        <title>Araport11: a complete reannotation of the Arabidopsis thaliana reference genome.</title>
        <authorList>
            <person name="Cheng C.Y."/>
            <person name="Krishnakumar V."/>
            <person name="Chan A.P."/>
            <person name="Thibaud-Nissen F."/>
            <person name="Schobel S."/>
            <person name="Town C.D."/>
        </authorList>
    </citation>
    <scope>GENOME REANNOTATION</scope>
    <source>
        <strain>cv. Columbia</strain>
    </source>
</reference>
<reference key="3">
    <citation type="journal article" date="2003" name="Science">
        <title>Empirical analysis of transcriptional activity in the Arabidopsis genome.</title>
        <authorList>
            <person name="Yamada K."/>
            <person name="Lim J."/>
            <person name="Dale J.M."/>
            <person name="Chen H."/>
            <person name="Shinn P."/>
            <person name="Palm C.J."/>
            <person name="Southwick A.M."/>
            <person name="Wu H.C."/>
            <person name="Kim C.J."/>
            <person name="Nguyen M."/>
            <person name="Pham P.K."/>
            <person name="Cheuk R.F."/>
            <person name="Karlin-Newmann G."/>
            <person name="Liu S.X."/>
            <person name="Lam B."/>
            <person name="Sakano H."/>
            <person name="Wu T."/>
            <person name="Yu G."/>
            <person name="Miranda M."/>
            <person name="Quach H.L."/>
            <person name="Tripp M."/>
            <person name="Chang C.H."/>
            <person name="Lee J.M."/>
            <person name="Toriumi M.J."/>
            <person name="Chan M.M."/>
            <person name="Tang C.C."/>
            <person name="Onodera C.S."/>
            <person name="Deng J.M."/>
            <person name="Akiyama K."/>
            <person name="Ansari Y."/>
            <person name="Arakawa T."/>
            <person name="Banh J."/>
            <person name="Banno F."/>
            <person name="Bowser L."/>
            <person name="Brooks S.Y."/>
            <person name="Carninci P."/>
            <person name="Chao Q."/>
            <person name="Choy N."/>
            <person name="Enju A."/>
            <person name="Goldsmith A.D."/>
            <person name="Gurjal M."/>
            <person name="Hansen N.F."/>
            <person name="Hayashizaki Y."/>
            <person name="Johnson-Hopson C."/>
            <person name="Hsuan V.W."/>
            <person name="Iida K."/>
            <person name="Karnes M."/>
            <person name="Khan S."/>
            <person name="Koesema E."/>
            <person name="Ishida J."/>
            <person name="Jiang P.X."/>
            <person name="Jones T."/>
            <person name="Kawai J."/>
            <person name="Kamiya A."/>
            <person name="Meyers C."/>
            <person name="Nakajima M."/>
            <person name="Narusaka M."/>
            <person name="Seki M."/>
            <person name="Sakurai T."/>
            <person name="Satou M."/>
            <person name="Tamse R."/>
            <person name="Vaysberg M."/>
            <person name="Wallender E.K."/>
            <person name="Wong C."/>
            <person name="Yamamura Y."/>
            <person name="Yuan S."/>
            <person name="Shinozaki K."/>
            <person name="Davis R.W."/>
            <person name="Theologis A."/>
            <person name="Ecker J.R."/>
        </authorList>
    </citation>
    <scope>NUCLEOTIDE SEQUENCE [LARGE SCALE MRNA]</scope>
    <source>
        <strain>cv. Columbia</strain>
    </source>
</reference>
<reference key="4">
    <citation type="submission" date="2005-03" db="EMBL/GenBank/DDBJ databases">
        <title>Large-scale analysis of RIKEN Arabidopsis full-length (RAFL) cDNAs.</title>
        <authorList>
            <person name="Totoki Y."/>
            <person name="Seki M."/>
            <person name="Ishida J."/>
            <person name="Nakajima M."/>
            <person name="Enju A."/>
            <person name="Kamiya A."/>
            <person name="Narusaka M."/>
            <person name="Shin-i T."/>
            <person name="Nakagawa M."/>
            <person name="Sakamoto N."/>
            <person name="Oishi K."/>
            <person name="Kohara Y."/>
            <person name="Kobayashi M."/>
            <person name="Toyoda A."/>
            <person name="Sakaki Y."/>
            <person name="Sakurai T."/>
            <person name="Iida K."/>
            <person name="Akiyama K."/>
            <person name="Satou M."/>
            <person name="Toyoda T."/>
            <person name="Konagaya A."/>
            <person name="Carninci P."/>
            <person name="Kawai J."/>
            <person name="Hayashizaki Y."/>
            <person name="Shinozaki K."/>
        </authorList>
    </citation>
    <scope>NUCLEOTIDE SEQUENCE [LARGE SCALE MRNA]</scope>
    <source>
        <strain>cv. Columbia</strain>
    </source>
</reference>
<protein>
    <recommendedName>
        <fullName>F-box protein At3g27290</fullName>
    </recommendedName>
</protein>
<proteinExistence type="evidence at transcript level"/>